<organism>
    <name type="scientific">Lactobacillus johnsonii (strain CNCM I-12250 / La1 / NCC 533)</name>
    <dbReference type="NCBI Taxonomy" id="257314"/>
    <lineage>
        <taxon>Bacteria</taxon>
        <taxon>Bacillati</taxon>
        <taxon>Bacillota</taxon>
        <taxon>Bacilli</taxon>
        <taxon>Lactobacillales</taxon>
        <taxon>Lactobacillaceae</taxon>
        <taxon>Lactobacillus</taxon>
    </lineage>
</organism>
<protein>
    <recommendedName>
        <fullName evidence="1">Adenylate kinase</fullName>
        <shortName evidence="1">AK</shortName>
        <ecNumber evidence="1">2.7.4.3</ecNumber>
    </recommendedName>
    <alternativeName>
        <fullName evidence="1">ATP-AMP transphosphorylase</fullName>
    </alternativeName>
    <alternativeName>
        <fullName evidence="1">ATP:AMP phosphotransferase</fullName>
    </alternativeName>
    <alternativeName>
        <fullName evidence="1">Adenylate monophosphate kinase</fullName>
    </alternativeName>
</protein>
<keyword id="KW-0067">ATP-binding</keyword>
<keyword id="KW-0963">Cytoplasm</keyword>
<keyword id="KW-0418">Kinase</keyword>
<keyword id="KW-0479">Metal-binding</keyword>
<keyword id="KW-0545">Nucleotide biosynthesis</keyword>
<keyword id="KW-0547">Nucleotide-binding</keyword>
<keyword id="KW-0808">Transferase</keyword>
<keyword id="KW-0862">Zinc</keyword>
<evidence type="ECO:0000255" key="1">
    <source>
        <dbReference type="HAMAP-Rule" id="MF_00235"/>
    </source>
</evidence>
<proteinExistence type="inferred from homology"/>
<feature type="chain" id="PRO_0000158780" description="Adenylate kinase">
    <location>
        <begin position="1"/>
        <end position="217"/>
    </location>
</feature>
<feature type="region of interest" description="NMP" evidence="1">
    <location>
        <begin position="31"/>
        <end position="60"/>
    </location>
</feature>
<feature type="region of interest" description="LID" evidence="1">
    <location>
        <begin position="127"/>
        <end position="165"/>
    </location>
</feature>
<feature type="binding site" evidence="1">
    <location>
        <begin position="11"/>
        <end position="16"/>
    </location>
    <ligand>
        <name>ATP</name>
        <dbReference type="ChEBI" id="CHEBI:30616"/>
    </ligand>
</feature>
<feature type="binding site" evidence="1">
    <location>
        <position position="32"/>
    </location>
    <ligand>
        <name>AMP</name>
        <dbReference type="ChEBI" id="CHEBI:456215"/>
    </ligand>
</feature>
<feature type="binding site" evidence="1">
    <location>
        <position position="37"/>
    </location>
    <ligand>
        <name>AMP</name>
        <dbReference type="ChEBI" id="CHEBI:456215"/>
    </ligand>
</feature>
<feature type="binding site" evidence="1">
    <location>
        <begin position="58"/>
        <end position="60"/>
    </location>
    <ligand>
        <name>AMP</name>
        <dbReference type="ChEBI" id="CHEBI:456215"/>
    </ligand>
</feature>
<feature type="binding site" evidence="1">
    <location>
        <begin position="86"/>
        <end position="89"/>
    </location>
    <ligand>
        <name>AMP</name>
        <dbReference type="ChEBI" id="CHEBI:456215"/>
    </ligand>
</feature>
<feature type="binding site" evidence="1">
    <location>
        <position position="93"/>
    </location>
    <ligand>
        <name>AMP</name>
        <dbReference type="ChEBI" id="CHEBI:456215"/>
    </ligand>
</feature>
<feature type="binding site" evidence="1">
    <location>
        <position position="128"/>
    </location>
    <ligand>
        <name>ATP</name>
        <dbReference type="ChEBI" id="CHEBI:30616"/>
    </ligand>
</feature>
<feature type="binding site" evidence="1">
    <location>
        <position position="131"/>
    </location>
    <ligand>
        <name>Zn(2+)</name>
        <dbReference type="ChEBI" id="CHEBI:29105"/>
        <note>structural</note>
    </ligand>
</feature>
<feature type="binding site" evidence="1">
    <location>
        <position position="134"/>
    </location>
    <ligand>
        <name>Zn(2+)</name>
        <dbReference type="ChEBI" id="CHEBI:29105"/>
        <note>structural</note>
    </ligand>
</feature>
<feature type="binding site" evidence="1">
    <location>
        <begin position="137"/>
        <end position="138"/>
    </location>
    <ligand>
        <name>ATP</name>
        <dbReference type="ChEBI" id="CHEBI:30616"/>
    </ligand>
</feature>
<feature type="binding site" evidence="1">
    <location>
        <position position="151"/>
    </location>
    <ligand>
        <name>Zn(2+)</name>
        <dbReference type="ChEBI" id="CHEBI:29105"/>
        <note>structural</note>
    </ligand>
</feature>
<feature type="binding site" evidence="1">
    <location>
        <position position="154"/>
    </location>
    <ligand>
        <name>Zn(2+)</name>
        <dbReference type="ChEBI" id="CHEBI:29105"/>
        <note>structural</note>
    </ligand>
</feature>
<feature type="binding site" evidence="1">
    <location>
        <position position="162"/>
    </location>
    <ligand>
        <name>AMP</name>
        <dbReference type="ChEBI" id="CHEBI:456215"/>
    </ligand>
</feature>
<feature type="binding site" evidence="1">
    <location>
        <position position="173"/>
    </location>
    <ligand>
        <name>AMP</name>
        <dbReference type="ChEBI" id="CHEBI:456215"/>
    </ligand>
</feature>
<feature type="binding site" evidence="1">
    <location>
        <position position="201"/>
    </location>
    <ligand>
        <name>ATP</name>
        <dbReference type="ChEBI" id="CHEBI:30616"/>
    </ligand>
</feature>
<sequence length="217" mass="24300">MINLILLGLPGAGKGTASESIVDKYHLAHISTGDMFREAMANETPVGLEAKSYIDKGNLVPDEVTAKLVEERLKQPDTKNGFILDGFPRTTVQAELLEDITKRLEKPLTNVIAIDVDEDVLIKRLSARYICKKCGATYNKISNPTKVEGTCDRCGGHEFFQREDDKPEVVKNRLEVNKKMNTPLRDFYEEKGILSTVNGEQTPEKVFEDIDKILSKD</sequence>
<comment type="function">
    <text evidence="1">Catalyzes the reversible transfer of the terminal phosphate group between ATP and AMP. Plays an important role in cellular energy homeostasis and in adenine nucleotide metabolism.</text>
</comment>
<comment type="catalytic activity">
    <reaction evidence="1">
        <text>AMP + ATP = 2 ADP</text>
        <dbReference type="Rhea" id="RHEA:12973"/>
        <dbReference type="ChEBI" id="CHEBI:30616"/>
        <dbReference type="ChEBI" id="CHEBI:456215"/>
        <dbReference type="ChEBI" id="CHEBI:456216"/>
        <dbReference type="EC" id="2.7.4.3"/>
    </reaction>
</comment>
<comment type="pathway">
    <text evidence="1">Purine metabolism; AMP biosynthesis via salvage pathway; AMP from ADP: step 1/1.</text>
</comment>
<comment type="subunit">
    <text evidence="1">Monomer.</text>
</comment>
<comment type="subcellular location">
    <subcellularLocation>
        <location evidence="1">Cytoplasm</location>
    </subcellularLocation>
</comment>
<comment type="domain">
    <text evidence="1">Consists of three domains, a large central CORE domain and two small peripheral domains, NMPbind and LID, which undergo movements during catalysis. The LID domain closes over the site of phosphoryl transfer upon ATP binding. Assembling and dissambling the active center during each catalytic cycle provides an effective means to prevent ATP hydrolysis. Some bacteria have evolved a zinc-coordinating structure that stabilizes the LID domain.</text>
</comment>
<comment type="similarity">
    <text evidence="1">Belongs to the adenylate kinase family.</text>
</comment>
<reference key="1">
    <citation type="journal article" date="2004" name="Proc. Natl. Acad. Sci. U.S.A.">
        <title>The genome sequence of the probiotic intestinal bacterium Lactobacillus johnsonii NCC 533.</title>
        <authorList>
            <person name="Pridmore R.D."/>
            <person name="Berger B."/>
            <person name="Desiere F."/>
            <person name="Vilanova D."/>
            <person name="Barretto C."/>
            <person name="Pittet A.-C."/>
            <person name="Zwahlen M.-C."/>
            <person name="Rouvet M."/>
            <person name="Altermann E."/>
            <person name="Barrangou R."/>
            <person name="Mollet B."/>
            <person name="Mercenier A."/>
            <person name="Klaenhammer T."/>
            <person name="Arigoni F."/>
            <person name="Schell M.A."/>
        </authorList>
    </citation>
    <scope>NUCLEOTIDE SEQUENCE [LARGE SCALE GENOMIC DNA]</scope>
    <source>
        <strain>CNCM I-1225 / La1 / NCC 533</strain>
    </source>
</reference>
<gene>
    <name evidence="1" type="primary">adk</name>
    <name type="ordered locus">LJ_0357</name>
</gene>
<dbReference type="EC" id="2.7.4.3" evidence="1"/>
<dbReference type="EMBL" id="AE017198">
    <property type="protein sequence ID" value="AAS08346.1"/>
    <property type="molecule type" value="Genomic_DNA"/>
</dbReference>
<dbReference type="RefSeq" id="WP_004895847.1">
    <property type="nucleotide sequence ID" value="NC_005362.1"/>
</dbReference>
<dbReference type="SMR" id="Q74L69"/>
<dbReference type="KEGG" id="ljo:LJ_0357"/>
<dbReference type="eggNOG" id="COG0563">
    <property type="taxonomic scope" value="Bacteria"/>
</dbReference>
<dbReference type="HOGENOM" id="CLU_032354_1_2_9"/>
<dbReference type="UniPathway" id="UPA00588">
    <property type="reaction ID" value="UER00649"/>
</dbReference>
<dbReference type="Proteomes" id="UP000000581">
    <property type="component" value="Chromosome"/>
</dbReference>
<dbReference type="GO" id="GO:0005737">
    <property type="term" value="C:cytoplasm"/>
    <property type="evidence" value="ECO:0007669"/>
    <property type="project" value="UniProtKB-SubCell"/>
</dbReference>
<dbReference type="GO" id="GO:0004017">
    <property type="term" value="F:adenylate kinase activity"/>
    <property type="evidence" value="ECO:0007669"/>
    <property type="project" value="UniProtKB-UniRule"/>
</dbReference>
<dbReference type="GO" id="GO:0005524">
    <property type="term" value="F:ATP binding"/>
    <property type="evidence" value="ECO:0007669"/>
    <property type="project" value="UniProtKB-UniRule"/>
</dbReference>
<dbReference type="GO" id="GO:0008270">
    <property type="term" value="F:zinc ion binding"/>
    <property type="evidence" value="ECO:0007669"/>
    <property type="project" value="UniProtKB-UniRule"/>
</dbReference>
<dbReference type="GO" id="GO:0044209">
    <property type="term" value="P:AMP salvage"/>
    <property type="evidence" value="ECO:0007669"/>
    <property type="project" value="UniProtKB-UniRule"/>
</dbReference>
<dbReference type="CDD" id="cd01428">
    <property type="entry name" value="ADK"/>
    <property type="match status" value="1"/>
</dbReference>
<dbReference type="FunFam" id="3.40.50.300:FF:000106">
    <property type="entry name" value="Adenylate kinase mitochondrial"/>
    <property type="match status" value="1"/>
</dbReference>
<dbReference type="Gene3D" id="3.40.50.300">
    <property type="entry name" value="P-loop containing nucleotide triphosphate hydrolases"/>
    <property type="match status" value="1"/>
</dbReference>
<dbReference type="HAMAP" id="MF_00235">
    <property type="entry name" value="Adenylate_kinase_Adk"/>
    <property type="match status" value="1"/>
</dbReference>
<dbReference type="InterPro" id="IPR006259">
    <property type="entry name" value="Adenyl_kin_sub"/>
</dbReference>
<dbReference type="InterPro" id="IPR000850">
    <property type="entry name" value="Adenylat/UMP-CMP_kin"/>
</dbReference>
<dbReference type="InterPro" id="IPR033690">
    <property type="entry name" value="Adenylat_kinase_CS"/>
</dbReference>
<dbReference type="InterPro" id="IPR007862">
    <property type="entry name" value="Adenylate_kinase_lid-dom"/>
</dbReference>
<dbReference type="InterPro" id="IPR027417">
    <property type="entry name" value="P-loop_NTPase"/>
</dbReference>
<dbReference type="NCBIfam" id="TIGR01351">
    <property type="entry name" value="adk"/>
    <property type="match status" value="1"/>
</dbReference>
<dbReference type="NCBIfam" id="NF001380">
    <property type="entry name" value="PRK00279.1-2"/>
    <property type="match status" value="1"/>
</dbReference>
<dbReference type="NCBIfam" id="NF001381">
    <property type="entry name" value="PRK00279.1-3"/>
    <property type="match status" value="1"/>
</dbReference>
<dbReference type="PANTHER" id="PTHR23359">
    <property type="entry name" value="NUCLEOTIDE KINASE"/>
    <property type="match status" value="1"/>
</dbReference>
<dbReference type="Pfam" id="PF00406">
    <property type="entry name" value="ADK"/>
    <property type="match status" value="1"/>
</dbReference>
<dbReference type="Pfam" id="PF05191">
    <property type="entry name" value="ADK_lid"/>
    <property type="match status" value="1"/>
</dbReference>
<dbReference type="PRINTS" id="PR00094">
    <property type="entry name" value="ADENYLTKNASE"/>
</dbReference>
<dbReference type="SUPFAM" id="SSF52540">
    <property type="entry name" value="P-loop containing nucleoside triphosphate hydrolases"/>
    <property type="match status" value="1"/>
</dbReference>
<dbReference type="PROSITE" id="PS00113">
    <property type="entry name" value="ADENYLATE_KINASE"/>
    <property type="match status" value="1"/>
</dbReference>
<accession>Q74L69</accession>
<name>KAD_LACJO</name>